<comment type="function">
    <text evidence="1">Catalyzes the NADPH-dependent rearrangement and reduction of 1-deoxy-D-xylulose-5-phosphate (DXP) to 2-C-methyl-D-erythritol 4-phosphate (MEP).</text>
</comment>
<comment type="catalytic activity">
    <reaction evidence="1">
        <text>2-C-methyl-D-erythritol 4-phosphate + NADP(+) = 1-deoxy-D-xylulose 5-phosphate + NADPH + H(+)</text>
        <dbReference type="Rhea" id="RHEA:13717"/>
        <dbReference type="ChEBI" id="CHEBI:15378"/>
        <dbReference type="ChEBI" id="CHEBI:57783"/>
        <dbReference type="ChEBI" id="CHEBI:57792"/>
        <dbReference type="ChEBI" id="CHEBI:58262"/>
        <dbReference type="ChEBI" id="CHEBI:58349"/>
        <dbReference type="EC" id="1.1.1.267"/>
    </reaction>
    <physiologicalReaction direction="right-to-left" evidence="1">
        <dbReference type="Rhea" id="RHEA:13719"/>
    </physiologicalReaction>
</comment>
<comment type="cofactor">
    <cofactor evidence="1">
        <name>Mg(2+)</name>
        <dbReference type="ChEBI" id="CHEBI:18420"/>
    </cofactor>
    <cofactor evidence="1">
        <name>Mn(2+)</name>
        <dbReference type="ChEBI" id="CHEBI:29035"/>
    </cofactor>
</comment>
<comment type="pathway">
    <text evidence="1">Isoprenoid biosynthesis; isopentenyl diphosphate biosynthesis via DXP pathway; isopentenyl diphosphate from 1-deoxy-D-xylulose 5-phosphate: step 1/6.</text>
</comment>
<comment type="similarity">
    <text evidence="1">Belongs to the DXR family.</text>
</comment>
<sequence>MKGICILGSTGSIGVSTLDVLARHPDRYRVVALSANGNVDRLFEQCRAHRPRYAAVIRAEAAACLRERLMAAGLGGIEVLAGPEALEQIASLPEVDSVMAAIVGAAGLLPTLAAARAGKDVLLANKEALVMSGPLFMAEVARSGARLLPIDSEHNAVFQCMPAAYRAGSRAVGVRRILLTASGGPFLHTPLAELETVTPEQAVAHPNWVMGRKISVDSATMMNKGLEVIEACLLFNAKPDDVQVVVHRQSVIHSMVDYVDGTVLAQMGTPDMRIPIAHALAWPDRFESGAESLDLFAVRQLNFERPDLARFPCLRLAYEAVGAGGTAPAILNAANETAVAAFLDRRLAFTGIPRVIEHCMARVAPNAADAIESVLQADAETRKVAQKYIDDLRV</sequence>
<proteinExistence type="inferred from homology"/>
<name>DXR_METCA</name>
<evidence type="ECO:0000255" key="1">
    <source>
        <dbReference type="HAMAP-Rule" id="MF_00183"/>
    </source>
</evidence>
<gene>
    <name evidence="1" type="primary">dxr</name>
    <name type="ordered locus">MCA0573</name>
</gene>
<accession>Q60BA4</accession>
<organism>
    <name type="scientific">Methylococcus capsulatus (strain ATCC 33009 / NCIMB 11132 / Bath)</name>
    <dbReference type="NCBI Taxonomy" id="243233"/>
    <lineage>
        <taxon>Bacteria</taxon>
        <taxon>Pseudomonadati</taxon>
        <taxon>Pseudomonadota</taxon>
        <taxon>Gammaproteobacteria</taxon>
        <taxon>Methylococcales</taxon>
        <taxon>Methylococcaceae</taxon>
        <taxon>Methylococcus</taxon>
    </lineage>
</organism>
<reference key="1">
    <citation type="journal article" date="2004" name="PLoS Biol.">
        <title>Genomic insights into methanotrophy: the complete genome sequence of Methylococcus capsulatus (Bath).</title>
        <authorList>
            <person name="Ward N.L."/>
            <person name="Larsen O."/>
            <person name="Sakwa J."/>
            <person name="Bruseth L."/>
            <person name="Khouri H.M."/>
            <person name="Durkin A.S."/>
            <person name="Dimitrov G."/>
            <person name="Jiang L."/>
            <person name="Scanlan D."/>
            <person name="Kang K.H."/>
            <person name="Lewis M.R."/>
            <person name="Nelson K.E."/>
            <person name="Methe B.A."/>
            <person name="Wu M."/>
            <person name="Heidelberg J.F."/>
            <person name="Paulsen I.T."/>
            <person name="Fouts D.E."/>
            <person name="Ravel J."/>
            <person name="Tettelin H."/>
            <person name="Ren Q."/>
            <person name="Read T.D."/>
            <person name="DeBoy R.T."/>
            <person name="Seshadri R."/>
            <person name="Salzberg S.L."/>
            <person name="Jensen H.B."/>
            <person name="Birkeland N.K."/>
            <person name="Nelson W.C."/>
            <person name="Dodson R.J."/>
            <person name="Grindhaug S.H."/>
            <person name="Holt I.E."/>
            <person name="Eidhammer I."/>
            <person name="Jonasen I."/>
            <person name="Vanaken S."/>
            <person name="Utterback T.R."/>
            <person name="Feldblyum T.V."/>
            <person name="Fraser C.M."/>
            <person name="Lillehaug J.R."/>
            <person name="Eisen J.A."/>
        </authorList>
    </citation>
    <scope>NUCLEOTIDE SEQUENCE [LARGE SCALE GENOMIC DNA]</scope>
    <source>
        <strain>ATCC 33009 / NCIMB 11132 / Bath</strain>
    </source>
</reference>
<protein>
    <recommendedName>
        <fullName evidence="1">1-deoxy-D-xylulose 5-phosphate reductoisomerase</fullName>
        <shortName evidence="1">DXP reductoisomerase</shortName>
        <ecNumber evidence="1">1.1.1.267</ecNumber>
    </recommendedName>
    <alternativeName>
        <fullName evidence="1">1-deoxyxylulose-5-phosphate reductoisomerase</fullName>
    </alternativeName>
    <alternativeName>
        <fullName evidence="1">2-C-methyl-D-erythritol 4-phosphate synthase</fullName>
    </alternativeName>
</protein>
<keyword id="KW-0414">Isoprene biosynthesis</keyword>
<keyword id="KW-0464">Manganese</keyword>
<keyword id="KW-0479">Metal-binding</keyword>
<keyword id="KW-0521">NADP</keyword>
<keyword id="KW-0560">Oxidoreductase</keyword>
<keyword id="KW-1185">Reference proteome</keyword>
<dbReference type="EC" id="1.1.1.267" evidence="1"/>
<dbReference type="EMBL" id="AE017282">
    <property type="protein sequence ID" value="AAU93237.1"/>
    <property type="molecule type" value="Genomic_DNA"/>
</dbReference>
<dbReference type="RefSeq" id="WP_010959921.1">
    <property type="nucleotide sequence ID" value="NC_002977.6"/>
</dbReference>
<dbReference type="SMR" id="Q60BA4"/>
<dbReference type="STRING" id="243233.MCA0573"/>
<dbReference type="GeneID" id="88222905"/>
<dbReference type="KEGG" id="mca:MCA0573"/>
<dbReference type="eggNOG" id="COG0743">
    <property type="taxonomic scope" value="Bacteria"/>
</dbReference>
<dbReference type="HOGENOM" id="CLU_035714_4_0_6"/>
<dbReference type="UniPathway" id="UPA00056">
    <property type="reaction ID" value="UER00092"/>
</dbReference>
<dbReference type="Proteomes" id="UP000006821">
    <property type="component" value="Chromosome"/>
</dbReference>
<dbReference type="GO" id="GO:0030604">
    <property type="term" value="F:1-deoxy-D-xylulose-5-phosphate reductoisomerase activity"/>
    <property type="evidence" value="ECO:0007669"/>
    <property type="project" value="UniProtKB-UniRule"/>
</dbReference>
<dbReference type="GO" id="GO:0030145">
    <property type="term" value="F:manganese ion binding"/>
    <property type="evidence" value="ECO:0007669"/>
    <property type="project" value="TreeGrafter"/>
</dbReference>
<dbReference type="GO" id="GO:0070402">
    <property type="term" value="F:NADPH binding"/>
    <property type="evidence" value="ECO:0007669"/>
    <property type="project" value="InterPro"/>
</dbReference>
<dbReference type="GO" id="GO:0051484">
    <property type="term" value="P:isopentenyl diphosphate biosynthetic process, methylerythritol 4-phosphate pathway involved in terpenoid biosynthetic process"/>
    <property type="evidence" value="ECO:0007669"/>
    <property type="project" value="TreeGrafter"/>
</dbReference>
<dbReference type="FunFam" id="3.40.50.720:FF:000045">
    <property type="entry name" value="1-deoxy-D-xylulose 5-phosphate reductoisomerase"/>
    <property type="match status" value="1"/>
</dbReference>
<dbReference type="Gene3D" id="1.10.1740.10">
    <property type="match status" value="1"/>
</dbReference>
<dbReference type="Gene3D" id="3.40.50.720">
    <property type="entry name" value="NAD(P)-binding Rossmann-like Domain"/>
    <property type="match status" value="1"/>
</dbReference>
<dbReference type="HAMAP" id="MF_00183">
    <property type="entry name" value="DXP_reductoisom"/>
    <property type="match status" value="1"/>
</dbReference>
<dbReference type="InterPro" id="IPR003821">
    <property type="entry name" value="DXP_reductoisomerase"/>
</dbReference>
<dbReference type="InterPro" id="IPR013644">
    <property type="entry name" value="DXP_reductoisomerase_C"/>
</dbReference>
<dbReference type="InterPro" id="IPR013512">
    <property type="entry name" value="DXP_reductoisomerase_N"/>
</dbReference>
<dbReference type="InterPro" id="IPR026877">
    <property type="entry name" value="DXPR_C"/>
</dbReference>
<dbReference type="InterPro" id="IPR036169">
    <property type="entry name" value="DXPR_C_sf"/>
</dbReference>
<dbReference type="InterPro" id="IPR036291">
    <property type="entry name" value="NAD(P)-bd_dom_sf"/>
</dbReference>
<dbReference type="NCBIfam" id="TIGR00243">
    <property type="entry name" value="Dxr"/>
    <property type="match status" value="1"/>
</dbReference>
<dbReference type="NCBIfam" id="NF003938">
    <property type="entry name" value="PRK05447.1-1"/>
    <property type="match status" value="1"/>
</dbReference>
<dbReference type="NCBIfam" id="NF009114">
    <property type="entry name" value="PRK12464.1"/>
    <property type="match status" value="1"/>
</dbReference>
<dbReference type="PANTHER" id="PTHR30525">
    <property type="entry name" value="1-DEOXY-D-XYLULOSE 5-PHOSPHATE REDUCTOISOMERASE"/>
    <property type="match status" value="1"/>
</dbReference>
<dbReference type="PANTHER" id="PTHR30525:SF0">
    <property type="entry name" value="1-DEOXY-D-XYLULOSE 5-PHOSPHATE REDUCTOISOMERASE, CHLOROPLASTIC"/>
    <property type="match status" value="1"/>
</dbReference>
<dbReference type="Pfam" id="PF08436">
    <property type="entry name" value="DXP_redisom_C"/>
    <property type="match status" value="1"/>
</dbReference>
<dbReference type="Pfam" id="PF02670">
    <property type="entry name" value="DXP_reductoisom"/>
    <property type="match status" value="1"/>
</dbReference>
<dbReference type="Pfam" id="PF13288">
    <property type="entry name" value="DXPR_C"/>
    <property type="match status" value="1"/>
</dbReference>
<dbReference type="PIRSF" id="PIRSF006205">
    <property type="entry name" value="Dxp_reductismrs"/>
    <property type="match status" value="1"/>
</dbReference>
<dbReference type="SUPFAM" id="SSF69055">
    <property type="entry name" value="1-deoxy-D-xylulose-5-phosphate reductoisomerase, C-terminal domain"/>
    <property type="match status" value="1"/>
</dbReference>
<dbReference type="SUPFAM" id="SSF55347">
    <property type="entry name" value="Glyceraldehyde-3-phosphate dehydrogenase-like, C-terminal domain"/>
    <property type="match status" value="1"/>
</dbReference>
<dbReference type="SUPFAM" id="SSF51735">
    <property type="entry name" value="NAD(P)-binding Rossmann-fold domains"/>
    <property type="match status" value="1"/>
</dbReference>
<feature type="chain" id="PRO_0000163674" description="1-deoxy-D-xylulose 5-phosphate reductoisomerase">
    <location>
        <begin position="1"/>
        <end position="394"/>
    </location>
</feature>
<feature type="binding site" evidence="1">
    <location>
        <position position="10"/>
    </location>
    <ligand>
        <name>NADPH</name>
        <dbReference type="ChEBI" id="CHEBI:57783"/>
    </ligand>
</feature>
<feature type="binding site" evidence="1">
    <location>
        <position position="11"/>
    </location>
    <ligand>
        <name>NADPH</name>
        <dbReference type="ChEBI" id="CHEBI:57783"/>
    </ligand>
</feature>
<feature type="binding site" evidence="1">
    <location>
        <position position="12"/>
    </location>
    <ligand>
        <name>NADPH</name>
        <dbReference type="ChEBI" id="CHEBI:57783"/>
    </ligand>
</feature>
<feature type="binding site" evidence="1">
    <location>
        <position position="13"/>
    </location>
    <ligand>
        <name>NADPH</name>
        <dbReference type="ChEBI" id="CHEBI:57783"/>
    </ligand>
</feature>
<feature type="binding site" evidence="1">
    <location>
        <position position="38"/>
    </location>
    <ligand>
        <name>NADPH</name>
        <dbReference type="ChEBI" id="CHEBI:57783"/>
    </ligand>
</feature>
<feature type="binding site" evidence="1">
    <location>
        <position position="125"/>
    </location>
    <ligand>
        <name>NADPH</name>
        <dbReference type="ChEBI" id="CHEBI:57783"/>
    </ligand>
</feature>
<feature type="binding site" evidence="1">
    <location>
        <position position="126"/>
    </location>
    <ligand>
        <name>1-deoxy-D-xylulose 5-phosphate</name>
        <dbReference type="ChEBI" id="CHEBI:57792"/>
    </ligand>
</feature>
<feature type="binding site" evidence="1">
    <location>
        <position position="127"/>
    </location>
    <ligand>
        <name>NADPH</name>
        <dbReference type="ChEBI" id="CHEBI:57783"/>
    </ligand>
</feature>
<feature type="binding site" evidence="1">
    <location>
        <position position="151"/>
    </location>
    <ligand>
        <name>Mn(2+)</name>
        <dbReference type="ChEBI" id="CHEBI:29035"/>
    </ligand>
</feature>
<feature type="binding site" evidence="1">
    <location>
        <position position="152"/>
    </location>
    <ligand>
        <name>1-deoxy-D-xylulose 5-phosphate</name>
        <dbReference type="ChEBI" id="CHEBI:57792"/>
    </ligand>
</feature>
<feature type="binding site" evidence="1">
    <location>
        <position position="153"/>
    </location>
    <ligand>
        <name>1-deoxy-D-xylulose 5-phosphate</name>
        <dbReference type="ChEBI" id="CHEBI:57792"/>
    </ligand>
</feature>
<feature type="binding site" evidence="1">
    <location>
        <position position="153"/>
    </location>
    <ligand>
        <name>Mn(2+)</name>
        <dbReference type="ChEBI" id="CHEBI:29035"/>
    </ligand>
</feature>
<feature type="binding site" evidence="1">
    <location>
        <position position="182"/>
    </location>
    <ligand>
        <name>1-deoxy-D-xylulose 5-phosphate</name>
        <dbReference type="ChEBI" id="CHEBI:57792"/>
    </ligand>
</feature>
<feature type="binding site" evidence="1">
    <location>
        <position position="205"/>
    </location>
    <ligand>
        <name>1-deoxy-D-xylulose 5-phosphate</name>
        <dbReference type="ChEBI" id="CHEBI:57792"/>
    </ligand>
</feature>
<feature type="binding site" evidence="1">
    <location>
        <position position="211"/>
    </location>
    <ligand>
        <name>NADPH</name>
        <dbReference type="ChEBI" id="CHEBI:57783"/>
    </ligand>
</feature>
<feature type="binding site" evidence="1">
    <location>
        <position position="218"/>
    </location>
    <ligand>
        <name>1-deoxy-D-xylulose 5-phosphate</name>
        <dbReference type="ChEBI" id="CHEBI:57792"/>
    </ligand>
</feature>
<feature type="binding site" evidence="1">
    <location>
        <position position="223"/>
    </location>
    <ligand>
        <name>1-deoxy-D-xylulose 5-phosphate</name>
        <dbReference type="ChEBI" id="CHEBI:57792"/>
    </ligand>
</feature>
<feature type="binding site" evidence="1">
    <location>
        <position position="224"/>
    </location>
    <ligand>
        <name>1-deoxy-D-xylulose 5-phosphate</name>
        <dbReference type="ChEBI" id="CHEBI:57792"/>
    </ligand>
</feature>
<feature type="binding site" evidence="1">
    <location>
        <position position="227"/>
    </location>
    <ligand>
        <name>1-deoxy-D-xylulose 5-phosphate</name>
        <dbReference type="ChEBI" id="CHEBI:57792"/>
    </ligand>
</feature>
<feature type="binding site" evidence="1">
    <location>
        <position position="227"/>
    </location>
    <ligand>
        <name>Mn(2+)</name>
        <dbReference type="ChEBI" id="CHEBI:29035"/>
    </ligand>
</feature>